<sequence length="382" mass="43555">MSKKQRCLMMESLPHEVVECILERLDADPLLRFKAVSKQWKSTIESPFFQRRQFTQRQQSGNPDVLMVSRCADINSEIEALTTLVLGSSSSVKIPTPWEEEEEEDKEYSVSQDSCDGLVCLFDKFKSGFVFNPATRWYHPLPLCQLQQLLIAIGDGFYDLGYRVSRLGFGKDKLTGTYKPVWLYNSIEIGLENATTCEVFDFSTNAWRYVSPAAPYRIVGCPAPVCVDGSLHWFTECEETKILSFDLHTETFQVVSKAPFANVDGFDIVMCNLDNRLCVSEMKLPNQVIWSFNSGNKTWHKMCSINLDITSRWFGPTQVCAVLPLALLDGKKKKKKKLLFYCRVRKRTMVVHDDETKSYDVAFEADSIGHPVCYFPSLISIS</sequence>
<organism>
    <name type="scientific">Arabidopsis thaliana</name>
    <name type="common">Mouse-ear cress</name>
    <dbReference type="NCBI Taxonomy" id="3702"/>
    <lineage>
        <taxon>Eukaryota</taxon>
        <taxon>Viridiplantae</taxon>
        <taxon>Streptophyta</taxon>
        <taxon>Embryophyta</taxon>
        <taxon>Tracheophyta</taxon>
        <taxon>Spermatophyta</taxon>
        <taxon>Magnoliopsida</taxon>
        <taxon>eudicotyledons</taxon>
        <taxon>Gunneridae</taxon>
        <taxon>Pentapetalae</taxon>
        <taxon>rosids</taxon>
        <taxon>malvids</taxon>
        <taxon>Brassicales</taxon>
        <taxon>Brassicaceae</taxon>
        <taxon>Camelineae</taxon>
        <taxon>Arabidopsis</taxon>
    </lineage>
</organism>
<dbReference type="EMBL" id="AC000132">
    <property type="protein sequence ID" value="AAB60722.1"/>
    <property type="molecule type" value="Genomic_DNA"/>
</dbReference>
<dbReference type="EMBL" id="CP002684">
    <property type="protein sequence ID" value="AEE28475.1"/>
    <property type="molecule type" value="Genomic_DNA"/>
</dbReference>
<dbReference type="EMBL" id="AK229128">
    <property type="protein sequence ID" value="BAF01003.1"/>
    <property type="molecule type" value="mRNA"/>
</dbReference>
<dbReference type="PIR" id="C86230">
    <property type="entry name" value="C86230"/>
</dbReference>
<dbReference type="RefSeq" id="NP_172436.1">
    <property type="nucleotide sequence ID" value="NM_100837.4"/>
</dbReference>
<dbReference type="SMR" id="O04488"/>
<dbReference type="BioGRID" id="22734">
    <property type="interactions" value="3"/>
</dbReference>
<dbReference type="FunCoup" id="O04488">
    <property type="interactions" value="4"/>
</dbReference>
<dbReference type="STRING" id="3702.O04488"/>
<dbReference type="iPTMnet" id="O04488"/>
<dbReference type="PaxDb" id="3702-AT1G09650.1"/>
<dbReference type="EnsemblPlants" id="AT1G09650.1">
    <property type="protein sequence ID" value="AT1G09650.1"/>
    <property type="gene ID" value="AT1G09650"/>
</dbReference>
<dbReference type="GeneID" id="837493"/>
<dbReference type="Gramene" id="AT1G09650.1">
    <property type="protein sequence ID" value="AT1G09650.1"/>
    <property type="gene ID" value="AT1G09650"/>
</dbReference>
<dbReference type="KEGG" id="ath:AT1G09650"/>
<dbReference type="Araport" id="AT1G09650"/>
<dbReference type="TAIR" id="AT1G09650"/>
<dbReference type="HOGENOM" id="CLU_027176_4_2_1"/>
<dbReference type="InParanoid" id="O04488"/>
<dbReference type="OMA" id="PYRIVGC"/>
<dbReference type="PhylomeDB" id="O04488"/>
<dbReference type="PRO" id="PR:O04488"/>
<dbReference type="Proteomes" id="UP000006548">
    <property type="component" value="Chromosome 1"/>
</dbReference>
<dbReference type="ExpressionAtlas" id="O04488">
    <property type="expression patterns" value="baseline and differential"/>
</dbReference>
<dbReference type="FunFam" id="2.120.10.80:FF:000273">
    <property type="entry name" value="F-box/LRR-repeat/kelch-repeat protein At1g09650"/>
    <property type="match status" value="1"/>
</dbReference>
<dbReference type="Gene3D" id="1.20.1280.50">
    <property type="match status" value="1"/>
</dbReference>
<dbReference type="Gene3D" id="2.120.10.80">
    <property type="entry name" value="Kelch-type beta propeller"/>
    <property type="match status" value="1"/>
</dbReference>
<dbReference type="InterPro" id="IPR006527">
    <property type="entry name" value="F-box-assoc_dom_typ1"/>
</dbReference>
<dbReference type="InterPro" id="IPR017451">
    <property type="entry name" value="F-box-assoc_interact_dom"/>
</dbReference>
<dbReference type="InterPro" id="IPR036047">
    <property type="entry name" value="F-box-like_dom_sf"/>
</dbReference>
<dbReference type="InterPro" id="IPR001810">
    <property type="entry name" value="F-box_dom"/>
</dbReference>
<dbReference type="InterPro" id="IPR011043">
    <property type="entry name" value="Gal_Oxase/kelch_b-propeller"/>
</dbReference>
<dbReference type="InterPro" id="IPR015915">
    <property type="entry name" value="Kelch-typ_b-propeller"/>
</dbReference>
<dbReference type="InterPro" id="IPR050796">
    <property type="entry name" value="SCF_F-box_component"/>
</dbReference>
<dbReference type="NCBIfam" id="TIGR01640">
    <property type="entry name" value="F_box_assoc_1"/>
    <property type="match status" value="1"/>
</dbReference>
<dbReference type="PANTHER" id="PTHR31672">
    <property type="entry name" value="BNACNNG10540D PROTEIN"/>
    <property type="match status" value="1"/>
</dbReference>
<dbReference type="PANTHER" id="PTHR31672:SF13">
    <property type="entry name" value="F-BOX PROTEIN CPR30-LIKE"/>
    <property type="match status" value="1"/>
</dbReference>
<dbReference type="Pfam" id="PF00646">
    <property type="entry name" value="F-box"/>
    <property type="match status" value="1"/>
</dbReference>
<dbReference type="Pfam" id="PF07734">
    <property type="entry name" value="FBA_1"/>
    <property type="match status" value="1"/>
</dbReference>
<dbReference type="SMART" id="SM00256">
    <property type="entry name" value="FBOX"/>
    <property type="match status" value="1"/>
</dbReference>
<dbReference type="SUPFAM" id="SSF81383">
    <property type="entry name" value="F-box domain"/>
    <property type="match status" value="1"/>
</dbReference>
<dbReference type="SUPFAM" id="SSF50965">
    <property type="entry name" value="Galactose oxidase, central domain"/>
    <property type="match status" value="1"/>
</dbReference>
<dbReference type="PROSITE" id="PS50181">
    <property type="entry name" value="FBOX"/>
    <property type="match status" value="1"/>
</dbReference>
<protein>
    <recommendedName>
        <fullName>F-box/LRR-repeat/kelch-repeat protein At1g09650</fullName>
    </recommendedName>
</protein>
<proteinExistence type="evidence at transcript level"/>
<gene>
    <name type="ordered locus">At1g09650</name>
    <name type="ORF">F21M12.4</name>
</gene>
<name>FBLK1_ARATH</name>
<reference key="1">
    <citation type="journal article" date="2000" name="Nature">
        <title>Sequence and analysis of chromosome 1 of the plant Arabidopsis thaliana.</title>
        <authorList>
            <person name="Theologis A."/>
            <person name="Ecker J.R."/>
            <person name="Palm C.J."/>
            <person name="Federspiel N.A."/>
            <person name="Kaul S."/>
            <person name="White O."/>
            <person name="Alonso J."/>
            <person name="Altafi H."/>
            <person name="Araujo R."/>
            <person name="Bowman C.L."/>
            <person name="Brooks S.Y."/>
            <person name="Buehler E."/>
            <person name="Chan A."/>
            <person name="Chao Q."/>
            <person name="Chen H."/>
            <person name="Cheuk R.F."/>
            <person name="Chin C.W."/>
            <person name="Chung M.K."/>
            <person name="Conn L."/>
            <person name="Conway A.B."/>
            <person name="Conway A.R."/>
            <person name="Creasy T.H."/>
            <person name="Dewar K."/>
            <person name="Dunn P."/>
            <person name="Etgu P."/>
            <person name="Feldblyum T.V."/>
            <person name="Feng J.-D."/>
            <person name="Fong B."/>
            <person name="Fujii C.Y."/>
            <person name="Gill J.E."/>
            <person name="Goldsmith A.D."/>
            <person name="Haas B."/>
            <person name="Hansen N.F."/>
            <person name="Hughes B."/>
            <person name="Huizar L."/>
            <person name="Hunter J.L."/>
            <person name="Jenkins J."/>
            <person name="Johnson-Hopson C."/>
            <person name="Khan S."/>
            <person name="Khaykin E."/>
            <person name="Kim C.J."/>
            <person name="Koo H.L."/>
            <person name="Kremenetskaia I."/>
            <person name="Kurtz D.B."/>
            <person name="Kwan A."/>
            <person name="Lam B."/>
            <person name="Langin-Hooper S."/>
            <person name="Lee A."/>
            <person name="Lee J.M."/>
            <person name="Lenz C.A."/>
            <person name="Li J.H."/>
            <person name="Li Y.-P."/>
            <person name="Lin X."/>
            <person name="Liu S.X."/>
            <person name="Liu Z.A."/>
            <person name="Luros J.S."/>
            <person name="Maiti R."/>
            <person name="Marziali A."/>
            <person name="Militscher J."/>
            <person name="Miranda M."/>
            <person name="Nguyen M."/>
            <person name="Nierman W.C."/>
            <person name="Osborne B.I."/>
            <person name="Pai G."/>
            <person name="Peterson J."/>
            <person name="Pham P.K."/>
            <person name="Rizzo M."/>
            <person name="Rooney T."/>
            <person name="Rowley D."/>
            <person name="Sakano H."/>
            <person name="Salzberg S.L."/>
            <person name="Schwartz J.R."/>
            <person name="Shinn P."/>
            <person name="Southwick A.M."/>
            <person name="Sun H."/>
            <person name="Tallon L.J."/>
            <person name="Tambunga G."/>
            <person name="Toriumi M.J."/>
            <person name="Town C.D."/>
            <person name="Utterback T."/>
            <person name="Van Aken S."/>
            <person name="Vaysberg M."/>
            <person name="Vysotskaia V.S."/>
            <person name="Walker M."/>
            <person name="Wu D."/>
            <person name="Yu G."/>
            <person name="Fraser C.M."/>
            <person name="Venter J.C."/>
            <person name="Davis R.W."/>
        </authorList>
    </citation>
    <scope>NUCLEOTIDE SEQUENCE [LARGE SCALE GENOMIC DNA]</scope>
    <source>
        <strain>cv. Columbia</strain>
    </source>
</reference>
<reference key="2">
    <citation type="journal article" date="2017" name="Plant J.">
        <title>Araport11: a complete reannotation of the Arabidopsis thaliana reference genome.</title>
        <authorList>
            <person name="Cheng C.Y."/>
            <person name="Krishnakumar V."/>
            <person name="Chan A.P."/>
            <person name="Thibaud-Nissen F."/>
            <person name="Schobel S."/>
            <person name="Town C.D."/>
        </authorList>
    </citation>
    <scope>GENOME REANNOTATION</scope>
    <source>
        <strain>cv. Columbia</strain>
    </source>
</reference>
<reference key="3">
    <citation type="submission" date="2006-07" db="EMBL/GenBank/DDBJ databases">
        <title>Large-scale analysis of RIKEN Arabidopsis full-length (RAFL) cDNAs.</title>
        <authorList>
            <person name="Totoki Y."/>
            <person name="Seki M."/>
            <person name="Ishida J."/>
            <person name="Nakajima M."/>
            <person name="Enju A."/>
            <person name="Kamiya A."/>
            <person name="Narusaka M."/>
            <person name="Shin-i T."/>
            <person name="Nakagawa M."/>
            <person name="Sakamoto N."/>
            <person name="Oishi K."/>
            <person name="Kohara Y."/>
            <person name="Kobayashi M."/>
            <person name="Toyoda A."/>
            <person name="Sakaki Y."/>
            <person name="Sakurai T."/>
            <person name="Iida K."/>
            <person name="Akiyama K."/>
            <person name="Satou M."/>
            <person name="Toyoda T."/>
            <person name="Konagaya A."/>
            <person name="Carninci P."/>
            <person name="Kawai J."/>
            <person name="Hayashizaki Y."/>
            <person name="Shinozaki K."/>
        </authorList>
    </citation>
    <scope>NUCLEOTIDE SEQUENCE [LARGE SCALE MRNA]</scope>
    <source>
        <strain>cv. Columbia</strain>
    </source>
</reference>
<feature type="chain" id="PRO_0000283163" description="F-box/LRR-repeat/kelch-repeat protein At1g09650">
    <location>
        <begin position="1"/>
        <end position="382"/>
    </location>
</feature>
<feature type="domain" description="F-box" evidence="1">
    <location>
        <begin position="7"/>
        <end position="52"/>
    </location>
</feature>
<feature type="repeat" description="LRR 1">
    <location>
        <begin position="78"/>
        <end position="101"/>
    </location>
</feature>
<feature type="repeat" description="Kelch 1">
    <location>
        <begin position="180"/>
        <end position="227"/>
    </location>
</feature>
<feature type="repeat" description="LRR 2">
    <location>
        <begin position="239"/>
        <end position="262"/>
    </location>
</feature>
<feature type="repeat" description="Kelch 2">
    <location>
        <begin position="270"/>
        <end position="319"/>
    </location>
</feature>
<accession>O04488</accession>
<keyword id="KW-0880">Kelch repeat</keyword>
<keyword id="KW-0433">Leucine-rich repeat</keyword>
<keyword id="KW-1185">Reference proteome</keyword>
<keyword id="KW-0677">Repeat</keyword>
<evidence type="ECO:0000255" key="1">
    <source>
        <dbReference type="PROSITE-ProRule" id="PRU00080"/>
    </source>
</evidence>